<proteinExistence type="inferred from homology"/>
<dbReference type="EC" id="5.4.2.7" evidence="1"/>
<dbReference type="EMBL" id="AE016879">
    <property type="protein sequence ID" value="AAP28028.1"/>
    <property type="molecule type" value="Genomic_DNA"/>
</dbReference>
<dbReference type="EMBL" id="AE017334">
    <property type="protein sequence ID" value="AAT33429.1"/>
    <property type="molecule type" value="Genomic_DNA"/>
</dbReference>
<dbReference type="EMBL" id="AE017225">
    <property type="protein sequence ID" value="AAT56298.1"/>
    <property type="molecule type" value="Genomic_DNA"/>
</dbReference>
<dbReference type="RefSeq" id="NP_846542.1">
    <property type="nucleotide sequence ID" value="NC_003997.3"/>
</dbReference>
<dbReference type="RefSeq" id="WP_001046068.1">
    <property type="nucleotide sequence ID" value="NZ_WXXJ01000027.1"/>
</dbReference>
<dbReference type="RefSeq" id="YP_030247.1">
    <property type="nucleotide sequence ID" value="NC_005945.1"/>
</dbReference>
<dbReference type="SMR" id="Q81ME0"/>
<dbReference type="IntAct" id="Q81ME0">
    <property type="interactions" value="13"/>
</dbReference>
<dbReference type="STRING" id="261594.GBAA_4309"/>
<dbReference type="DNASU" id="1087477"/>
<dbReference type="GeneID" id="45023977"/>
<dbReference type="KEGG" id="ban:BA_4309"/>
<dbReference type="KEGG" id="banh:HYU01_21045"/>
<dbReference type="KEGG" id="bar:GBAA_4309"/>
<dbReference type="KEGG" id="bat:BAS3997"/>
<dbReference type="PATRIC" id="fig|198094.11.peg.4278"/>
<dbReference type="eggNOG" id="COG1015">
    <property type="taxonomic scope" value="Bacteria"/>
</dbReference>
<dbReference type="HOGENOM" id="CLU_053861_0_0_9"/>
<dbReference type="OMA" id="SGHWEMM"/>
<dbReference type="OrthoDB" id="9769930at2"/>
<dbReference type="UniPathway" id="UPA00002">
    <property type="reaction ID" value="UER00467"/>
</dbReference>
<dbReference type="Proteomes" id="UP000000427">
    <property type="component" value="Chromosome"/>
</dbReference>
<dbReference type="Proteomes" id="UP000000594">
    <property type="component" value="Chromosome"/>
</dbReference>
<dbReference type="GO" id="GO:0005829">
    <property type="term" value="C:cytosol"/>
    <property type="evidence" value="ECO:0007669"/>
    <property type="project" value="TreeGrafter"/>
</dbReference>
<dbReference type="GO" id="GO:0000287">
    <property type="term" value="F:magnesium ion binding"/>
    <property type="evidence" value="ECO:0007669"/>
    <property type="project" value="InterPro"/>
</dbReference>
<dbReference type="GO" id="GO:0030145">
    <property type="term" value="F:manganese ion binding"/>
    <property type="evidence" value="ECO:0007669"/>
    <property type="project" value="UniProtKB-UniRule"/>
</dbReference>
<dbReference type="GO" id="GO:0008973">
    <property type="term" value="F:phosphopentomutase activity"/>
    <property type="evidence" value="ECO:0007669"/>
    <property type="project" value="UniProtKB-UniRule"/>
</dbReference>
<dbReference type="GO" id="GO:0006018">
    <property type="term" value="P:2-deoxyribose 1-phosphate catabolic process"/>
    <property type="evidence" value="ECO:0007669"/>
    <property type="project" value="UniProtKB-UniRule"/>
</dbReference>
<dbReference type="GO" id="GO:0006015">
    <property type="term" value="P:5-phosphoribose 1-diphosphate biosynthetic process"/>
    <property type="evidence" value="ECO:0007669"/>
    <property type="project" value="UniProtKB-UniPathway"/>
</dbReference>
<dbReference type="GO" id="GO:0043094">
    <property type="term" value="P:metabolic compound salvage"/>
    <property type="evidence" value="ECO:0007669"/>
    <property type="project" value="InterPro"/>
</dbReference>
<dbReference type="GO" id="GO:0009117">
    <property type="term" value="P:nucleotide metabolic process"/>
    <property type="evidence" value="ECO:0007669"/>
    <property type="project" value="InterPro"/>
</dbReference>
<dbReference type="CDD" id="cd16009">
    <property type="entry name" value="PPM"/>
    <property type="match status" value="1"/>
</dbReference>
<dbReference type="FunFam" id="3.30.70.1250:FF:000001">
    <property type="entry name" value="Phosphopentomutase"/>
    <property type="match status" value="1"/>
</dbReference>
<dbReference type="Gene3D" id="3.40.720.10">
    <property type="entry name" value="Alkaline Phosphatase, subunit A"/>
    <property type="match status" value="1"/>
</dbReference>
<dbReference type="Gene3D" id="3.30.70.1250">
    <property type="entry name" value="Phosphopentomutase"/>
    <property type="match status" value="1"/>
</dbReference>
<dbReference type="HAMAP" id="MF_00740">
    <property type="entry name" value="Phosphopentomut"/>
    <property type="match status" value="1"/>
</dbReference>
<dbReference type="InterPro" id="IPR017850">
    <property type="entry name" value="Alkaline_phosphatase_core_sf"/>
</dbReference>
<dbReference type="InterPro" id="IPR010045">
    <property type="entry name" value="DeoB"/>
</dbReference>
<dbReference type="InterPro" id="IPR006124">
    <property type="entry name" value="Metalloenzyme"/>
</dbReference>
<dbReference type="InterPro" id="IPR024052">
    <property type="entry name" value="Phosphopentomutase_DeoB_cap_sf"/>
</dbReference>
<dbReference type="NCBIfam" id="TIGR01696">
    <property type="entry name" value="deoB"/>
    <property type="match status" value="1"/>
</dbReference>
<dbReference type="NCBIfam" id="NF003766">
    <property type="entry name" value="PRK05362.1"/>
    <property type="match status" value="1"/>
</dbReference>
<dbReference type="PANTHER" id="PTHR21110">
    <property type="entry name" value="PHOSPHOPENTOMUTASE"/>
    <property type="match status" value="1"/>
</dbReference>
<dbReference type="PANTHER" id="PTHR21110:SF0">
    <property type="entry name" value="PHOSPHOPENTOMUTASE"/>
    <property type="match status" value="1"/>
</dbReference>
<dbReference type="Pfam" id="PF01676">
    <property type="entry name" value="Metalloenzyme"/>
    <property type="match status" value="1"/>
</dbReference>
<dbReference type="PIRSF" id="PIRSF001491">
    <property type="entry name" value="Ppentomutase"/>
    <property type="match status" value="1"/>
</dbReference>
<dbReference type="SUPFAM" id="SSF53649">
    <property type="entry name" value="Alkaline phosphatase-like"/>
    <property type="match status" value="1"/>
</dbReference>
<dbReference type="SUPFAM" id="SSF143856">
    <property type="entry name" value="DeoB insert domain-like"/>
    <property type="match status" value="1"/>
</dbReference>
<sequence>MNKYKRIFLVVMDSVGIGEAPDAEQFGDLGSDTIGHIAEHMNGLHMPNMVKLGLGNIREMKGISKVEKPLGYYTKMQEKSTGKDTMTGHWEIMGLYIDTPFQVFPEGFPKELLDELEEKTGRKIIGNKPASGTEILDELGQEQMETGSLIVYTSADSVLQIAAHEEVVPLDELYKICKIARELTLDEKYMVGRVIARPFVGEPGNFTRTPNRHDYALKPFGRTVMNELKDSDYDVIAIGKISDIYDGEGVTESLRTKSNMDGMDKVVDTLNMDFTGLSFLNLVDFDALFGHRRDPQGYGEALQEYDARLPEVFEKLKEDDLLLITADHGNDPVHHGTDHTREYVPLLAYSPSMKEGGQELPLRQTFADIGATVAENFGVKMPEYGTSFLNELKK</sequence>
<feature type="chain" id="PRO_0000199806" description="Phosphopentomutase">
    <location>
        <begin position="1"/>
        <end position="394"/>
    </location>
</feature>
<feature type="binding site" evidence="1">
    <location>
        <position position="13"/>
    </location>
    <ligand>
        <name>Mn(2+)</name>
        <dbReference type="ChEBI" id="CHEBI:29035"/>
        <label>1</label>
    </ligand>
</feature>
<feature type="binding site" evidence="1">
    <location>
        <position position="286"/>
    </location>
    <ligand>
        <name>Mn(2+)</name>
        <dbReference type="ChEBI" id="CHEBI:29035"/>
        <label>2</label>
    </ligand>
</feature>
<feature type="binding site" evidence="1">
    <location>
        <position position="291"/>
    </location>
    <ligand>
        <name>Mn(2+)</name>
        <dbReference type="ChEBI" id="CHEBI:29035"/>
        <label>2</label>
    </ligand>
</feature>
<feature type="binding site" evidence="1">
    <location>
        <position position="327"/>
    </location>
    <ligand>
        <name>Mn(2+)</name>
        <dbReference type="ChEBI" id="CHEBI:29035"/>
        <label>1</label>
    </ligand>
</feature>
<feature type="binding site" evidence="1">
    <location>
        <position position="328"/>
    </location>
    <ligand>
        <name>Mn(2+)</name>
        <dbReference type="ChEBI" id="CHEBI:29035"/>
        <label>1</label>
    </ligand>
</feature>
<feature type="binding site" evidence="1">
    <location>
        <position position="339"/>
    </location>
    <ligand>
        <name>Mn(2+)</name>
        <dbReference type="ChEBI" id="CHEBI:29035"/>
        <label>2</label>
    </ligand>
</feature>
<evidence type="ECO:0000255" key="1">
    <source>
        <dbReference type="HAMAP-Rule" id="MF_00740"/>
    </source>
</evidence>
<accession>Q81ME0</accession>
<accession>Q6HTU1</accession>
<accession>Q6KN28</accession>
<protein>
    <recommendedName>
        <fullName evidence="1">Phosphopentomutase</fullName>
        <ecNumber evidence="1">5.4.2.7</ecNumber>
    </recommendedName>
    <alternativeName>
        <fullName evidence="1">Phosphodeoxyribomutase</fullName>
    </alternativeName>
</protein>
<keyword id="KW-0963">Cytoplasm</keyword>
<keyword id="KW-0413">Isomerase</keyword>
<keyword id="KW-0464">Manganese</keyword>
<keyword id="KW-0479">Metal-binding</keyword>
<keyword id="KW-1185">Reference proteome</keyword>
<name>DEOB_BACAN</name>
<organism>
    <name type="scientific">Bacillus anthracis</name>
    <dbReference type="NCBI Taxonomy" id="1392"/>
    <lineage>
        <taxon>Bacteria</taxon>
        <taxon>Bacillati</taxon>
        <taxon>Bacillota</taxon>
        <taxon>Bacilli</taxon>
        <taxon>Bacillales</taxon>
        <taxon>Bacillaceae</taxon>
        <taxon>Bacillus</taxon>
        <taxon>Bacillus cereus group</taxon>
    </lineage>
</organism>
<reference key="1">
    <citation type="journal article" date="2003" name="Nature">
        <title>The genome sequence of Bacillus anthracis Ames and comparison to closely related bacteria.</title>
        <authorList>
            <person name="Read T.D."/>
            <person name="Peterson S.N."/>
            <person name="Tourasse N.J."/>
            <person name="Baillie L.W."/>
            <person name="Paulsen I.T."/>
            <person name="Nelson K.E."/>
            <person name="Tettelin H."/>
            <person name="Fouts D.E."/>
            <person name="Eisen J.A."/>
            <person name="Gill S.R."/>
            <person name="Holtzapple E.K."/>
            <person name="Okstad O.A."/>
            <person name="Helgason E."/>
            <person name="Rilstone J."/>
            <person name="Wu M."/>
            <person name="Kolonay J.F."/>
            <person name="Beanan M.J."/>
            <person name="Dodson R.J."/>
            <person name="Brinkac L.M."/>
            <person name="Gwinn M.L."/>
            <person name="DeBoy R.T."/>
            <person name="Madpu R."/>
            <person name="Daugherty S.C."/>
            <person name="Durkin A.S."/>
            <person name="Haft D.H."/>
            <person name="Nelson W.C."/>
            <person name="Peterson J.D."/>
            <person name="Pop M."/>
            <person name="Khouri H.M."/>
            <person name="Radune D."/>
            <person name="Benton J.L."/>
            <person name="Mahamoud Y."/>
            <person name="Jiang L."/>
            <person name="Hance I.R."/>
            <person name="Weidman J.F."/>
            <person name="Berry K.J."/>
            <person name="Plaut R.D."/>
            <person name="Wolf A.M."/>
            <person name="Watkins K.L."/>
            <person name="Nierman W.C."/>
            <person name="Hazen A."/>
            <person name="Cline R.T."/>
            <person name="Redmond C."/>
            <person name="Thwaite J.E."/>
            <person name="White O."/>
            <person name="Salzberg S.L."/>
            <person name="Thomason B."/>
            <person name="Friedlander A.M."/>
            <person name="Koehler T.M."/>
            <person name="Hanna P.C."/>
            <person name="Kolstoe A.-B."/>
            <person name="Fraser C.M."/>
        </authorList>
    </citation>
    <scope>NUCLEOTIDE SEQUENCE [LARGE SCALE GENOMIC DNA]</scope>
    <source>
        <strain>Ames / isolate Porton</strain>
    </source>
</reference>
<reference key="2">
    <citation type="journal article" date="2009" name="J. Bacteriol.">
        <title>The complete genome sequence of Bacillus anthracis Ames 'Ancestor'.</title>
        <authorList>
            <person name="Ravel J."/>
            <person name="Jiang L."/>
            <person name="Stanley S.T."/>
            <person name="Wilson M.R."/>
            <person name="Decker R.S."/>
            <person name="Read T.D."/>
            <person name="Worsham P."/>
            <person name="Keim P.S."/>
            <person name="Salzberg S.L."/>
            <person name="Fraser-Liggett C.M."/>
            <person name="Rasko D.A."/>
        </authorList>
    </citation>
    <scope>NUCLEOTIDE SEQUENCE [LARGE SCALE GENOMIC DNA]</scope>
    <source>
        <strain>Ames ancestor</strain>
    </source>
</reference>
<reference key="3">
    <citation type="submission" date="2004-01" db="EMBL/GenBank/DDBJ databases">
        <title>Complete genome sequence of Bacillus anthracis Sterne.</title>
        <authorList>
            <person name="Brettin T.S."/>
            <person name="Bruce D."/>
            <person name="Challacombe J.F."/>
            <person name="Gilna P."/>
            <person name="Han C."/>
            <person name="Hill K."/>
            <person name="Hitchcock P."/>
            <person name="Jackson P."/>
            <person name="Keim P."/>
            <person name="Longmire J."/>
            <person name="Lucas S."/>
            <person name="Okinaka R."/>
            <person name="Richardson P."/>
            <person name="Rubin E."/>
            <person name="Tice H."/>
        </authorList>
    </citation>
    <scope>NUCLEOTIDE SEQUENCE [LARGE SCALE GENOMIC DNA]</scope>
    <source>
        <strain>Sterne</strain>
    </source>
</reference>
<gene>
    <name evidence="1" type="primary">deoB</name>
    <name type="ordered locus">BA_4309</name>
    <name type="ordered locus">GBAA_4309</name>
    <name type="ordered locus">BAS3997</name>
</gene>
<comment type="function">
    <text evidence="1">Isomerase that catalyzes the conversion of deoxy-ribose 1-phosphate (dRib-1-P) and ribose 1-phosphate (Rib-1-P) to deoxy-ribose 5-phosphate (dRib-5-P) and ribose 5-phosphate (Rib-5-P), respectively.</text>
</comment>
<comment type="catalytic activity">
    <reaction evidence="1">
        <text>2-deoxy-alpha-D-ribose 1-phosphate = 2-deoxy-D-ribose 5-phosphate</text>
        <dbReference type="Rhea" id="RHEA:27658"/>
        <dbReference type="ChEBI" id="CHEBI:57259"/>
        <dbReference type="ChEBI" id="CHEBI:62877"/>
        <dbReference type="EC" id="5.4.2.7"/>
    </reaction>
</comment>
<comment type="catalytic activity">
    <reaction evidence="1">
        <text>alpha-D-ribose 1-phosphate = D-ribose 5-phosphate</text>
        <dbReference type="Rhea" id="RHEA:18793"/>
        <dbReference type="ChEBI" id="CHEBI:57720"/>
        <dbReference type="ChEBI" id="CHEBI:78346"/>
        <dbReference type="EC" id="5.4.2.7"/>
    </reaction>
</comment>
<comment type="cofactor">
    <cofactor evidence="1">
        <name>Mn(2+)</name>
        <dbReference type="ChEBI" id="CHEBI:29035"/>
    </cofactor>
    <text evidence="1">Binds 2 manganese ions.</text>
</comment>
<comment type="pathway">
    <text evidence="1">Carbohydrate degradation; 2-deoxy-D-ribose 1-phosphate degradation; D-glyceraldehyde 3-phosphate and acetaldehyde from 2-deoxy-alpha-D-ribose 1-phosphate: step 1/2.</text>
</comment>
<comment type="subcellular location">
    <subcellularLocation>
        <location evidence="1">Cytoplasm</location>
    </subcellularLocation>
</comment>
<comment type="similarity">
    <text evidence="1">Belongs to the phosphopentomutase family.</text>
</comment>